<proteinExistence type="evidence at protein level"/>
<gene>
    <name evidence="1" type="primary">btuE</name>
    <name type="ordered locus">b1710</name>
    <name type="ordered locus">JW1700</name>
</gene>
<comment type="function">
    <text evidence="2">Non-specific peroxidase that can use thioredoxin or glutathione as a reducing agent. In vitro, utilizes preferentially thioredoxin A to decompose hydrogen peroxide as well as cumene-, tert-butyl-, and linoleic acid hydroperoxides, suggesting that it may have one or more organic hydroperoxide as its physiological substrate.</text>
</comment>
<comment type="catalytic activity">
    <reaction evidence="1 2">
        <text>2 glutathione + H2O2 = glutathione disulfide + 2 H2O</text>
        <dbReference type="Rhea" id="RHEA:16833"/>
        <dbReference type="ChEBI" id="CHEBI:15377"/>
        <dbReference type="ChEBI" id="CHEBI:16240"/>
        <dbReference type="ChEBI" id="CHEBI:57925"/>
        <dbReference type="ChEBI" id="CHEBI:58297"/>
        <dbReference type="EC" id="1.11.1.9"/>
    </reaction>
</comment>
<comment type="catalytic activity">
    <reaction evidence="1 2">
        <text>a hydroperoxide + [thioredoxin]-dithiol = an alcohol + [thioredoxin]-disulfide + H2O</text>
        <dbReference type="Rhea" id="RHEA:62620"/>
        <dbReference type="Rhea" id="RHEA-COMP:10698"/>
        <dbReference type="Rhea" id="RHEA-COMP:10700"/>
        <dbReference type="ChEBI" id="CHEBI:15377"/>
        <dbReference type="ChEBI" id="CHEBI:29950"/>
        <dbReference type="ChEBI" id="CHEBI:30879"/>
        <dbReference type="ChEBI" id="CHEBI:35924"/>
        <dbReference type="ChEBI" id="CHEBI:50058"/>
        <dbReference type="EC" id="1.11.1.24"/>
    </reaction>
</comment>
<comment type="subcellular location">
    <subcellularLocation>
        <location evidence="6">Periplasm</location>
    </subcellularLocation>
    <text evidence="6">Appears to have a periplasmic location. It has the mean hydropathy of a soluble protein but lacks an obvious signal sequence.</text>
</comment>
<comment type="induction">
    <text evidence="2">Induced by oxidative stress conditions.</text>
</comment>
<comment type="disruption phenotype">
    <text evidence="3">Deletion has no significant effect on the binding, transport or utilization of vitamin B12 or other cobalamins.</text>
</comment>
<comment type="similarity">
    <text evidence="1">Belongs to the glutathione peroxidase family. BtuE subfamily.</text>
</comment>
<comment type="caution">
    <text evidence="5 6">Part of the btuCED operon, and was originally thought to participate in the transport of vitamin B12, but it was shown later that it plays no essential role in vitamin B12 transport.</text>
</comment>
<accession>P06610</accession>
<reference key="1">
    <citation type="journal article" date="1986" name="J. Bacteriol.">
        <title>Nucleotide sequence of the btuCED genes involved in vitamin B12 transport in Escherichia coli and homology with components of periplasmic-binding-protein-dependent transport systems.</title>
        <authorList>
            <person name="Friedrich M.J."/>
            <person name="Deveaux L.C."/>
            <person name="Kadner R.J."/>
        </authorList>
    </citation>
    <scope>NUCLEOTIDE SEQUENCE [GENOMIC DNA]</scope>
    <scope>SUBCELLULAR LOCATION</scope>
</reference>
<reference key="2">
    <citation type="journal article" date="1996" name="DNA Res.">
        <title>A 570-kb DNA sequence of the Escherichia coli K-12 genome corresponding to the 28.0-40.1 min region on the linkage map.</title>
        <authorList>
            <person name="Aiba H."/>
            <person name="Baba T."/>
            <person name="Fujita K."/>
            <person name="Hayashi K."/>
            <person name="Inada T."/>
            <person name="Isono K."/>
            <person name="Itoh T."/>
            <person name="Kasai H."/>
            <person name="Kashimoto K."/>
            <person name="Kimura S."/>
            <person name="Kitakawa M."/>
            <person name="Kitagawa M."/>
            <person name="Makino K."/>
            <person name="Miki T."/>
            <person name="Mizobuchi K."/>
            <person name="Mori H."/>
            <person name="Mori T."/>
            <person name="Motomura K."/>
            <person name="Nakade S."/>
            <person name="Nakamura Y."/>
            <person name="Nashimoto H."/>
            <person name="Nishio Y."/>
            <person name="Oshima T."/>
            <person name="Saito N."/>
            <person name="Sampei G."/>
            <person name="Seki Y."/>
            <person name="Sivasundaram S."/>
            <person name="Tagami H."/>
            <person name="Takeda J."/>
            <person name="Takemoto K."/>
            <person name="Takeuchi Y."/>
            <person name="Wada C."/>
            <person name="Yamamoto Y."/>
            <person name="Horiuchi T."/>
        </authorList>
    </citation>
    <scope>NUCLEOTIDE SEQUENCE [LARGE SCALE GENOMIC DNA]</scope>
    <source>
        <strain>K12 / W3110 / ATCC 27325 / DSM 5911</strain>
    </source>
</reference>
<reference key="3">
    <citation type="journal article" date="1997" name="Science">
        <title>The complete genome sequence of Escherichia coli K-12.</title>
        <authorList>
            <person name="Blattner F.R."/>
            <person name="Plunkett G. III"/>
            <person name="Bloch C.A."/>
            <person name="Perna N.T."/>
            <person name="Burland V."/>
            <person name="Riley M."/>
            <person name="Collado-Vides J."/>
            <person name="Glasner J.D."/>
            <person name="Rode C.K."/>
            <person name="Mayhew G.F."/>
            <person name="Gregor J."/>
            <person name="Davis N.W."/>
            <person name="Kirkpatrick H.A."/>
            <person name="Goeden M.A."/>
            <person name="Rose D.J."/>
            <person name="Mau B."/>
            <person name="Shao Y."/>
        </authorList>
    </citation>
    <scope>NUCLEOTIDE SEQUENCE [LARGE SCALE GENOMIC DNA]</scope>
    <source>
        <strain>K12 / MG1655 / ATCC 47076</strain>
    </source>
</reference>
<reference key="4">
    <citation type="journal article" date="2006" name="Mol. Syst. Biol.">
        <title>Highly accurate genome sequences of Escherichia coli K-12 strains MG1655 and W3110.</title>
        <authorList>
            <person name="Hayashi K."/>
            <person name="Morooka N."/>
            <person name="Yamamoto Y."/>
            <person name="Fujita K."/>
            <person name="Isono K."/>
            <person name="Choi S."/>
            <person name="Ohtsubo E."/>
            <person name="Baba T."/>
            <person name="Wanner B.L."/>
            <person name="Mori H."/>
            <person name="Horiuchi T."/>
        </authorList>
    </citation>
    <scope>NUCLEOTIDE SEQUENCE [LARGE SCALE GENOMIC DNA]</scope>
    <source>
        <strain>K12 / W3110 / ATCC 27325 / DSM 5911</strain>
    </source>
</reference>
<reference key="5">
    <citation type="journal article" date="1989" name="Mol. Gen. Genet.">
        <title>Vitamin B12 transport in Escherichia coli K12 does not require the btuE gene of the btuCED operon.</title>
        <authorList>
            <person name="Rioux C.R."/>
            <person name="Kadner R.J."/>
        </authorList>
    </citation>
    <scope>DISRUPTION PHENOTYPE</scope>
    <source>
        <strain>K12</strain>
    </source>
</reference>
<reference key="6">
    <citation type="journal article" date="2010" name="Biochem. Biophys. Res. Commun.">
        <title>The Escherichia coli btuE gene, encodes a glutathione peroxidase that is induced under oxidative stress conditions.</title>
        <authorList>
            <person name="Arenas F.A."/>
            <person name="Diaz W.A."/>
            <person name="Leal C.A."/>
            <person name="Perez-Donoso J.M."/>
            <person name="Imlay J.A."/>
            <person name="Vasquez C.C."/>
        </authorList>
    </citation>
    <scope>FUNCTION</scope>
    <scope>CATALYTIC ACTIVITY</scope>
    <scope>INDUCTION</scope>
</reference>
<name>BTUE_ECOLI</name>
<keyword id="KW-0560">Oxidoreductase</keyword>
<keyword id="KW-0574">Periplasm</keyword>
<keyword id="KW-0575">Peroxidase</keyword>
<keyword id="KW-1185">Reference proteome</keyword>
<keyword id="KW-0346">Stress response</keyword>
<evidence type="ECO:0000255" key="1">
    <source>
        <dbReference type="HAMAP-Rule" id="MF_02061"/>
    </source>
</evidence>
<evidence type="ECO:0000269" key="2">
    <source>
    </source>
</evidence>
<evidence type="ECO:0000269" key="3">
    <source>
    </source>
</evidence>
<evidence type="ECO:0000305" key="4"/>
<evidence type="ECO:0000305" key="5">
    <source>
    </source>
</evidence>
<evidence type="ECO:0000305" key="6">
    <source>
    </source>
</evidence>
<feature type="chain" id="PRO_0000066664" description="Thioredoxin/glutathione peroxidase BtuE">
    <location>
        <begin position="1"/>
        <end position="183"/>
    </location>
</feature>
<feature type="active site" evidence="1">
    <location>
        <position position="37"/>
    </location>
</feature>
<organism>
    <name type="scientific">Escherichia coli (strain K12)</name>
    <dbReference type="NCBI Taxonomy" id="83333"/>
    <lineage>
        <taxon>Bacteria</taxon>
        <taxon>Pseudomonadati</taxon>
        <taxon>Pseudomonadota</taxon>
        <taxon>Gammaproteobacteria</taxon>
        <taxon>Enterobacterales</taxon>
        <taxon>Enterobacteriaceae</taxon>
        <taxon>Escherichia</taxon>
    </lineage>
</organism>
<protein>
    <recommendedName>
        <fullName evidence="1 4">Thioredoxin/glutathione peroxidase BtuE</fullName>
        <ecNumber evidence="1 2">1.11.1.24</ecNumber>
        <ecNumber evidence="1 2">1.11.1.9</ecNumber>
    </recommendedName>
</protein>
<sequence>MQDSILTTVVKDIDGEVTTLEKFAGNVLLIVNVASKCGLTPQYEQLENIQKAWVDRGFMVLGFPCNQFLEQEPGSDEEIKTYCTTTWGVTFPMFSKIEVNGEGRHPLYQKLIAAAPTAVAPEESGFYARMVSKGRAPLYPDDILWNFEKFLVGRDGKVIQRFSPDMTPEDPIVMESIKLALAK</sequence>
<dbReference type="EC" id="1.11.1.24" evidence="1 2"/>
<dbReference type="EC" id="1.11.1.9" evidence="1 2"/>
<dbReference type="EMBL" id="M14031">
    <property type="protein sequence ID" value="AAA23527.1"/>
    <property type="molecule type" value="Genomic_DNA"/>
</dbReference>
<dbReference type="EMBL" id="U00096">
    <property type="protein sequence ID" value="AAC74780.1"/>
    <property type="molecule type" value="Genomic_DNA"/>
</dbReference>
<dbReference type="EMBL" id="AP009048">
    <property type="protein sequence ID" value="BAA15478.1"/>
    <property type="molecule type" value="Genomic_DNA"/>
</dbReference>
<dbReference type="PIR" id="F64929">
    <property type="entry name" value="QRECBE"/>
</dbReference>
<dbReference type="RefSeq" id="NP_416225.1">
    <property type="nucleotide sequence ID" value="NC_000913.3"/>
</dbReference>
<dbReference type="RefSeq" id="WP_001154168.1">
    <property type="nucleotide sequence ID" value="NZ_SSZK01000001.1"/>
</dbReference>
<dbReference type="SMR" id="P06610"/>
<dbReference type="BioGRID" id="4260286">
    <property type="interactions" value="52"/>
</dbReference>
<dbReference type="FunCoup" id="P06610">
    <property type="interactions" value="234"/>
</dbReference>
<dbReference type="IntAct" id="P06610">
    <property type="interactions" value="17"/>
</dbReference>
<dbReference type="STRING" id="511145.b1710"/>
<dbReference type="PeroxiBase" id="3987">
    <property type="entry name" value="EcoGPx01"/>
</dbReference>
<dbReference type="jPOST" id="P06610"/>
<dbReference type="PaxDb" id="511145-b1710"/>
<dbReference type="EnsemblBacteria" id="AAC74780">
    <property type="protein sequence ID" value="AAC74780"/>
    <property type="gene ID" value="b1710"/>
</dbReference>
<dbReference type="GeneID" id="945915"/>
<dbReference type="KEGG" id="ecj:JW1700"/>
<dbReference type="KEGG" id="eco:b1710"/>
<dbReference type="KEGG" id="ecoc:C3026_09790"/>
<dbReference type="PATRIC" id="fig|1411691.4.peg.547"/>
<dbReference type="EchoBASE" id="EB0127"/>
<dbReference type="eggNOG" id="COG0386">
    <property type="taxonomic scope" value="Bacteria"/>
</dbReference>
<dbReference type="HOGENOM" id="CLU_029507_1_2_6"/>
<dbReference type="InParanoid" id="P06610"/>
<dbReference type="OMA" id="QCGLTKQ"/>
<dbReference type="OrthoDB" id="9785502at2"/>
<dbReference type="PhylomeDB" id="P06610"/>
<dbReference type="BioCyc" id="EcoCyc:BTUE-MONOMER"/>
<dbReference type="BioCyc" id="MetaCyc:BTUE-MONOMER"/>
<dbReference type="PRO" id="PR:P06610"/>
<dbReference type="Proteomes" id="UP000000625">
    <property type="component" value="Chromosome"/>
</dbReference>
<dbReference type="GO" id="GO:0042597">
    <property type="term" value="C:periplasmic space"/>
    <property type="evidence" value="ECO:0000314"/>
    <property type="project" value="EcoliWiki"/>
</dbReference>
<dbReference type="GO" id="GO:0004602">
    <property type="term" value="F:glutathione peroxidase activity"/>
    <property type="evidence" value="ECO:0000314"/>
    <property type="project" value="EcoCyc"/>
</dbReference>
<dbReference type="GO" id="GO:0008379">
    <property type="term" value="F:thioredoxin peroxidase activity"/>
    <property type="evidence" value="ECO:0000314"/>
    <property type="project" value="EcoCyc"/>
</dbReference>
<dbReference type="GO" id="GO:0034599">
    <property type="term" value="P:cellular response to oxidative stress"/>
    <property type="evidence" value="ECO:0000318"/>
    <property type="project" value="GO_Central"/>
</dbReference>
<dbReference type="GO" id="GO:0033194">
    <property type="term" value="P:response to hydroperoxide"/>
    <property type="evidence" value="ECO:0000270"/>
    <property type="project" value="EcoCyc"/>
</dbReference>
<dbReference type="GO" id="GO:0000302">
    <property type="term" value="P:response to reactive oxygen species"/>
    <property type="evidence" value="ECO:0000315"/>
    <property type="project" value="EcoCyc"/>
</dbReference>
<dbReference type="CDD" id="cd00340">
    <property type="entry name" value="GSH_Peroxidase"/>
    <property type="match status" value="1"/>
</dbReference>
<dbReference type="FunFam" id="3.40.30.10:FF:000010">
    <property type="entry name" value="Glutathione peroxidase"/>
    <property type="match status" value="1"/>
</dbReference>
<dbReference type="Gene3D" id="3.40.30.10">
    <property type="entry name" value="Glutaredoxin"/>
    <property type="match status" value="1"/>
</dbReference>
<dbReference type="HAMAP" id="MF_02061">
    <property type="entry name" value="Thiored_glutath_peroxid"/>
    <property type="match status" value="1"/>
</dbReference>
<dbReference type="InterPro" id="IPR033674">
    <property type="entry name" value="BtuE"/>
</dbReference>
<dbReference type="InterPro" id="IPR000889">
    <property type="entry name" value="Glutathione_peroxidase"/>
</dbReference>
<dbReference type="InterPro" id="IPR029759">
    <property type="entry name" value="GPX_AS"/>
</dbReference>
<dbReference type="InterPro" id="IPR029760">
    <property type="entry name" value="GPX_CS"/>
</dbReference>
<dbReference type="InterPro" id="IPR036249">
    <property type="entry name" value="Thioredoxin-like_sf"/>
</dbReference>
<dbReference type="NCBIfam" id="NF007900">
    <property type="entry name" value="PRK10606.1"/>
    <property type="match status" value="1"/>
</dbReference>
<dbReference type="PANTHER" id="PTHR11592">
    <property type="entry name" value="GLUTATHIONE PEROXIDASE"/>
    <property type="match status" value="1"/>
</dbReference>
<dbReference type="PANTHER" id="PTHR11592:SF40">
    <property type="entry name" value="THIOREDOXIN_GLUTATHIONE PEROXIDASE BTUE"/>
    <property type="match status" value="1"/>
</dbReference>
<dbReference type="Pfam" id="PF00255">
    <property type="entry name" value="GSHPx"/>
    <property type="match status" value="1"/>
</dbReference>
<dbReference type="PIRSF" id="PIRSF000303">
    <property type="entry name" value="Glutathion_perox"/>
    <property type="match status" value="1"/>
</dbReference>
<dbReference type="PRINTS" id="PR01011">
    <property type="entry name" value="GLUTPROXDASE"/>
</dbReference>
<dbReference type="SUPFAM" id="SSF52833">
    <property type="entry name" value="Thioredoxin-like"/>
    <property type="match status" value="1"/>
</dbReference>
<dbReference type="PROSITE" id="PS00460">
    <property type="entry name" value="GLUTATHIONE_PEROXID_1"/>
    <property type="match status" value="1"/>
</dbReference>
<dbReference type="PROSITE" id="PS00763">
    <property type="entry name" value="GLUTATHIONE_PEROXID_2"/>
    <property type="match status" value="1"/>
</dbReference>
<dbReference type="PROSITE" id="PS51355">
    <property type="entry name" value="GLUTATHIONE_PEROXID_3"/>
    <property type="match status" value="1"/>
</dbReference>